<dbReference type="EC" id="2.4.2.9" evidence="1"/>
<dbReference type="EMBL" id="AP009484">
    <property type="protein sequence ID" value="BAH17475.1"/>
    <property type="molecule type" value="Genomic_DNA"/>
</dbReference>
<dbReference type="RefSeq" id="WP_012656675.1">
    <property type="nucleotide sequence ID" value="NC_011999.1"/>
</dbReference>
<dbReference type="SMR" id="B9EB64"/>
<dbReference type="STRING" id="458233.MCCL_0768"/>
<dbReference type="KEGG" id="mcl:MCCL_0768"/>
<dbReference type="eggNOG" id="COG2065">
    <property type="taxonomic scope" value="Bacteria"/>
</dbReference>
<dbReference type="HOGENOM" id="CLU_094234_2_1_9"/>
<dbReference type="OrthoDB" id="9802227at2"/>
<dbReference type="Proteomes" id="UP000001383">
    <property type="component" value="Chromosome"/>
</dbReference>
<dbReference type="GO" id="GO:0003723">
    <property type="term" value="F:RNA binding"/>
    <property type="evidence" value="ECO:0007669"/>
    <property type="project" value="UniProtKB-UniRule"/>
</dbReference>
<dbReference type="GO" id="GO:0004845">
    <property type="term" value="F:uracil phosphoribosyltransferase activity"/>
    <property type="evidence" value="ECO:0007669"/>
    <property type="project" value="UniProtKB-UniRule"/>
</dbReference>
<dbReference type="GO" id="GO:0006353">
    <property type="term" value="P:DNA-templated transcription termination"/>
    <property type="evidence" value="ECO:0007669"/>
    <property type="project" value="UniProtKB-UniRule"/>
</dbReference>
<dbReference type="CDD" id="cd06223">
    <property type="entry name" value="PRTases_typeI"/>
    <property type="match status" value="1"/>
</dbReference>
<dbReference type="FunFam" id="3.40.50.2020:FF:000020">
    <property type="entry name" value="Bifunctional protein PyrR"/>
    <property type="match status" value="1"/>
</dbReference>
<dbReference type="Gene3D" id="3.40.50.2020">
    <property type="match status" value="1"/>
</dbReference>
<dbReference type="HAMAP" id="MF_01219">
    <property type="entry name" value="PyrR"/>
    <property type="match status" value="1"/>
</dbReference>
<dbReference type="InterPro" id="IPR000836">
    <property type="entry name" value="PRibTrfase_dom"/>
</dbReference>
<dbReference type="InterPro" id="IPR029057">
    <property type="entry name" value="PRTase-like"/>
</dbReference>
<dbReference type="InterPro" id="IPR023050">
    <property type="entry name" value="PyrR"/>
</dbReference>
<dbReference type="InterPro" id="IPR050137">
    <property type="entry name" value="PyrR_bifunctional"/>
</dbReference>
<dbReference type="NCBIfam" id="NF003548">
    <property type="entry name" value="PRK05205.1-4"/>
    <property type="match status" value="1"/>
</dbReference>
<dbReference type="NCBIfam" id="NF003549">
    <property type="entry name" value="PRK05205.1-5"/>
    <property type="match status" value="1"/>
</dbReference>
<dbReference type="PANTHER" id="PTHR11608">
    <property type="entry name" value="BIFUNCTIONAL PROTEIN PYRR"/>
    <property type="match status" value="1"/>
</dbReference>
<dbReference type="PANTHER" id="PTHR11608:SF0">
    <property type="entry name" value="BIFUNCTIONAL PROTEIN PYRR"/>
    <property type="match status" value="1"/>
</dbReference>
<dbReference type="Pfam" id="PF00156">
    <property type="entry name" value="Pribosyltran"/>
    <property type="match status" value="1"/>
</dbReference>
<dbReference type="SUPFAM" id="SSF53271">
    <property type="entry name" value="PRTase-like"/>
    <property type="match status" value="1"/>
</dbReference>
<protein>
    <recommendedName>
        <fullName evidence="1">Bifunctional protein PyrR</fullName>
    </recommendedName>
    <domain>
        <recommendedName>
            <fullName evidence="1">Pyrimidine operon regulatory protein</fullName>
        </recommendedName>
    </domain>
    <domain>
        <recommendedName>
            <fullName evidence="1">Uracil phosphoribosyltransferase</fullName>
            <shortName evidence="1">UPRTase</shortName>
            <ecNumber evidence="1">2.4.2.9</ecNumber>
        </recommendedName>
    </domain>
</protein>
<sequence length="174" mass="19779">MDKRIILDDKAIDRTLTRIAHEILENNKGAHDLVLLGIRTRGIYLAQRIQSKIEKIDGITVPTGVLDVTQYRDDITDRVSQDVVAYKIDTDMNNRHVVIVDDVLYTGRTVRASLDAILDHVRPKRISLATLIDRGHRELPIRADFIGKNIPTALSEEIVVMLDEVDDKTQVYIK</sequence>
<evidence type="ECO:0000255" key="1">
    <source>
        <dbReference type="HAMAP-Rule" id="MF_01219"/>
    </source>
</evidence>
<comment type="function">
    <text evidence="1">Regulates transcriptional attenuation of the pyrimidine nucleotide (pyr) operon by binding in a uridine-dependent manner to specific sites on pyr mRNA. This disrupts an antiterminator hairpin in the RNA and favors formation of a downstream transcription terminator, leading to a reduced expression of downstream genes.</text>
</comment>
<comment type="function">
    <text evidence="1">Also displays a weak uracil phosphoribosyltransferase activity which is not physiologically significant.</text>
</comment>
<comment type="catalytic activity">
    <reaction evidence="1">
        <text>UMP + diphosphate = 5-phospho-alpha-D-ribose 1-diphosphate + uracil</text>
        <dbReference type="Rhea" id="RHEA:13017"/>
        <dbReference type="ChEBI" id="CHEBI:17568"/>
        <dbReference type="ChEBI" id="CHEBI:33019"/>
        <dbReference type="ChEBI" id="CHEBI:57865"/>
        <dbReference type="ChEBI" id="CHEBI:58017"/>
        <dbReference type="EC" id="2.4.2.9"/>
    </reaction>
</comment>
<comment type="subunit">
    <text evidence="1">Homodimer and homohexamer; in equilibrium.</text>
</comment>
<comment type="similarity">
    <text evidence="1">Belongs to the purine/pyrimidine phosphoribosyltransferase family. PyrR subfamily.</text>
</comment>
<name>PYRR_MACCJ</name>
<accession>B9EB64</accession>
<organism>
    <name type="scientific">Macrococcus caseolyticus (strain JCSC5402)</name>
    <name type="common">Macrococcoides caseolyticum</name>
    <dbReference type="NCBI Taxonomy" id="458233"/>
    <lineage>
        <taxon>Bacteria</taxon>
        <taxon>Bacillati</taxon>
        <taxon>Bacillota</taxon>
        <taxon>Bacilli</taxon>
        <taxon>Bacillales</taxon>
        <taxon>Staphylococcaceae</taxon>
        <taxon>Macrococcoides</taxon>
    </lineage>
</organism>
<gene>
    <name evidence="1" type="primary">pyrR</name>
    <name type="ordered locus">MCCL_0768</name>
</gene>
<reference key="1">
    <citation type="journal article" date="2009" name="J. Bacteriol.">
        <title>Complete genome sequence of Macrococcus caseolyticus strain JCSCS5402, reflecting the ancestral genome of the human-pathogenic staphylococci.</title>
        <authorList>
            <person name="Baba T."/>
            <person name="Kuwahara-Arai K."/>
            <person name="Uchiyama I."/>
            <person name="Takeuchi F."/>
            <person name="Ito T."/>
            <person name="Hiramatsu K."/>
        </authorList>
    </citation>
    <scope>NUCLEOTIDE SEQUENCE [LARGE SCALE GENOMIC DNA]</scope>
    <source>
        <strain>JCSC5402</strain>
    </source>
</reference>
<keyword id="KW-0328">Glycosyltransferase</keyword>
<keyword id="KW-1185">Reference proteome</keyword>
<keyword id="KW-0694">RNA-binding</keyword>
<keyword id="KW-0804">Transcription</keyword>
<keyword id="KW-0805">Transcription regulation</keyword>
<keyword id="KW-0806">Transcription termination</keyword>
<keyword id="KW-0808">Transferase</keyword>
<proteinExistence type="inferred from homology"/>
<feature type="chain" id="PRO_1000164850" description="Bifunctional protein PyrR">
    <location>
        <begin position="1"/>
        <end position="174"/>
    </location>
</feature>
<feature type="short sequence motif" description="PRPP-binding" evidence="1">
    <location>
        <begin position="97"/>
        <end position="109"/>
    </location>
</feature>